<gene>
    <name type="primary">NXPH2</name>
    <name type="synonym">NPH2</name>
</gene>
<sequence>MRLRPLPLVVVPGLLQLLFCDSKEVVHATEGLDWEDKDAPGTLVGNVVHSRIISPLRLFVKQSPVPKPGPMAYADSMENFWDWLANITEIQEPLARTKRRPIVKTGKFKKMFGWGDFHSNIKTVKLNLLITGKIVDHGNGTFSVYFRHNSTGLGNVSVSLVPPSKVVEFEVSPQSTLETKESKSFNCRIEYEKTDRAKKTALCNFDPSKICYQEQTQSHVSWLCSKPFKVICIYIAFYSVDYKLVQKVCPDYNYHSETPYLSSG</sequence>
<organism>
    <name type="scientific">Homo sapiens</name>
    <name type="common">Human</name>
    <dbReference type="NCBI Taxonomy" id="9606"/>
    <lineage>
        <taxon>Eukaryota</taxon>
        <taxon>Metazoa</taxon>
        <taxon>Chordata</taxon>
        <taxon>Craniata</taxon>
        <taxon>Vertebrata</taxon>
        <taxon>Euteleostomi</taxon>
        <taxon>Mammalia</taxon>
        <taxon>Eutheria</taxon>
        <taxon>Euarchontoglires</taxon>
        <taxon>Primates</taxon>
        <taxon>Haplorrhini</taxon>
        <taxon>Catarrhini</taxon>
        <taxon>Hominidae</taxon>
        <taxon>Homo</taxon>
    </lineage>
</organism>
<feature type="signal peptide" evidence="2">
    <location>
        <begin position="1"/>
        <end position="22"/>
    </location>
</feature>
<feature type="chain" id="PRO_0000020063" description="Neurexophilin-2">
    <location>
        <begin position="23"/>
        <end position="264"/>
    </location>
</feature>
<feature type="region of interest" description="II">
    <location>
        <begin position="23"/>
        <end position="90"/>
    </location>
</feature>
<feature type="region of interest" description="III">
    <location>
        <begin position="91"/>
        <end position="169"/>
    </location>
</feature>
<feature type="region of interest" description="IV (linker domain)">
    <location>
        <begin position="170"/>
        <end position="178"/>
    </location>
</feature>
<feature type="region of interest" description="V (Cys-rich)">
    <location>
        <begin position="179"/>
        <end position="264"/>
    </location>
</feature>
<feature type="glycosylation site" description="N-linked (GlcNAc...) asparagine" evidence="2">
    <location>
        <position position="86"/>
    </location>
</feature>
<feature type="glycosylation site" description="N-linked (GlcNAc...) asparagine" evidence="2">
    <location>
        <position position="139"/>
    </location>
</feature>
<feature type="glycosylation site" description="N-linked (GlcNAc...) asparagine" evidence="2">
    <location>
        <position position="149"/>
    </location>
</feature>
<feature type="glycosylation site" description="N-linked (GlcNAc...) asparagine" evidence="2">
    <location>
        <position position="155"/>
    </location>
</feature>
<feature type="sequence conflict" description="In Ref. 4; AAD02280." evidence="3" ref="4">
    <original>PLVVVP</original>
    <variation>ARVLVT</variation>
    <location>
        <begin position="7"/>
        <end position="12"/>
    </location>
</feature>
<keyword id="KW-0325">Glycoprotein</keyword>
<keyword id="KW-1267">Proteomics identification</keyword>
<keyword id="KW-1185">Reference proteome</keyword>
<keyword id="KW-0964">Secreted</keyword>
<keyword id="KW-0732">Signal</keyword>
<reference key="1">
    <citation type="submission" date="2004-02" db="EMBL/GenBank/DDBJ databases">
        <title>Cloning of a full-length human neurexophilin2 gene.</title>
        <authorList>
            <person name="Kawasaki A."/>
            <person name="Ohira M."/>
            <person name="Miyazaki K."/>
            <person name="Nakagawara A."/>
        </authorList>
    </citation>
    <scope>NUCLEOTIDE SEQUENCE [MRNA]</scope>
    <source>
        <tissue>Neuroblastoma</tissue>
    </source>
</reference>
<reference key="2">
    <citation type="journal article" date="2005" name="Nature">
        <title>Generation and annotation of the DNA sequences of human chromosomes 2 and 4.</title>
        <authorList>
            <person name="Hillier L.W."/>
            <person name="Graves T.A."/>
            <person name="Fulton R.S."/>
            <person name="Fulton L.A."/>
            <person name="Pepin K.H."/>
            <person name="Minx P."/>
            <person name="Wagner-McPherson C."/>
            <person name="Layman D."/>
            <person name="Wylie K."/>
            <person name="Sekhon M."/>
            <person name="Becker M.C."/>
            <person name="Fewell G.A."/>
            <person name="Delehaunty K.D."/>
            <person name="Miner T.L."/>
            <person name="Nash W.E."/>
            <person name="Kremitzki C."/>
            <person name="Oddy L."/>
            <person name="Du H."/>
            <person name="Sun H."/>
            <person name="Bradshaw-Cordum H."/>
            <person name="Ali J."/>
            <person name="Carter J."/>
            <person name="Cordes M."/>
            <person name="Harris A."/>
            <person name="Isak A."/>
            <person name="van Brunt A."/>
            <person name="Nguyen C."/>
            <person name="Du F."/>
            <person name="Courtney L."/>
            <person name="Kalicki J."/>
            <person name="Ozersky P."/>
            <person name="Abbott S."/>
            <person name="Armstrong J."/>
            <person name="Belter E.A."/>
            <person name="Caruso L."/>
            <person name="Cedroni M."/>
            <person name="Cotton M."/>
            <person name="Davidson T."/>
            <person name="Desai A."/>
            <person name="Elliott G."/>
            <person name="Erb T."/>
            <person name="Fronick C."/>
            <person name="Gaige T."/>
            <person name="Haakenson W."/>
            <person name="Haglund K."/>
            <person name="Holmes A."/>
            <person name="Harkins R."/>
            <person name="Kim K."/>
            <person name="Kruchowski S.S."/>
            <person name="Strong C.M."/>
            <person name="Grewal N."/>
            <person name="Goyea E."/>
            <person name="Hou S."/>
            <person name="Levy A."/>
            <person name="Martinka S."/>
            <person name="Mead K."/>
            <person name="McLellan M.D."/>
            <person name="Meyer R."/>
            <person name="Randall-Maher J."/>
            <person name="Tomlinson C."/>
            <person name="Dauphin-Kohlberg S."/>
            <person name="Kozlowicz-Reilly A."/>
            <person name="Shah N."/>
            <person name="Swearengen-Shahid S."/>
            <person name="Snider J."/>
            <person name="Strong J.T."/>
            <person name="Thompson J."/>
            <person name="Yoakum M."/>
            <person name="Leonard S."/>
            <person name="Pearman C."/>
            <person name="Trani L."/>
            <person name="Radionenko M."/>
            <person name="Waligorski J.E."/>
            <person name="Wang C."/>
            <person name="Rock S.M."/>
            <person name="Tin-Wollam A.-M."/>
            <person name="Maupin R."/>
            <person name="Latreille P."/>
            <person name="Wendl M.C."/>
            <person name="Yang S.-P."/>
            <person name="Pohl C."/>
            <person name="Wallis J.W."/>
            <person name="Spieth J."/>
            <person name="Bieri T.A."/>
            <person name="Berkowicz N."/>
            <person name="Nelson J.O."/>
            <person name="Osborne J."/>
            <person name="Ding L."/>
            <person name="Meyer R."/>
            <person name="Sabo A."/>
            <person name="Shotland Y."/>
            <person name="Sinha P."/>
            <person name="Wohldmann P.E."/>
            <person name="Cook L.L."/>
            <person name="Hickenbotham M.T."/>
            <person name="Eldred J."/>
            <person name="Williams D."/>
            <person name="Jones T.A."/>
            <person name="She X."/>
            <person name="Ciccarelli F.D."/>
            <person name="Izaurralde E."/>
            <person name="Taylor J."/>
            <person name="Schmutz J."/>
            <person name="Myers R.M."/>
            <person name="Cox D.R."/>
            <person name="Huang X."/>
            <person name="McPherson J.D."/>
            <person name="Mardis E.R."/>
            <person name="Clifton S.W."/>
            <person name="Warren W.C."/>
            <person name="Chinwalla A.T."/>
            <person name="Eddy S.R."/>
            <person name="Marra M.A."/>
            <person name="Ovcharenko I."/>
            <person name="Furey T.S."/>
            <person name="Miller W."/>
            <person name="Eichler E.E."/>
            <person name="Bork P."/>
            <person name="Suyama M."/>
            <person name="Torrents D."/>
            <person name="Waterston R.H."/>
            <person name="Wilson R.K."/>
        </authorList>
    </citation>
    <scope>NUCLEOTIDE SEQUENCE [LARGE SCALE GENOMIC DNA]</scope>
</reference>
<reference key="3">
    <citation type="journal article" date="2004" name="Genome Res.">
        <title>The status, quality, and expansion of the NIH full-length cDNA project: the Mammalian Gene Collection (MGC).</title>
        <authorList>
            <consortium name="The MGC Project Team"/>
        </authorList>
    </citation>
    <scope>NUCLEOTIDE SEQUENCE [LARGE SCALE MRNA]</scope>
</reference>
<reference key="4">
    <citation type="journal article" date="1998" name="J. Neurosci.">
        <title>Neurexophilins form a conserved family of neuropeptide-like glycoproteins.</title>
        <authorList>
            <person name="Missler M."/>
            <person name="Suedhof T.C."/>
        </authorList>
    </citation>
    <scope>NUCLEOTIDE SEQUENCE [MRNA] OF 3-264</scope>
</reference>
<accession>O95156</accession>
<accession>B7WP24</accession>
<accession>Q494R1</accession>
<accession>Q75QC3</accession>
<protein>
    <recommendedName>
        <fullName>Neurexophilin-2</fullName>
    </recommendedName>
</protein>
<evidence type="ECO:0000250" key="1"/>
<evidence type="ECO:0000255" key="2"/>
<evidence type="ECO:0000305" key="3"/>
<proteinExistence type="evidence at protein level"/>
<dbReference type="EMBL" id="AB162675">
    <property type="protein sequence ID" value="BAD11132.1"/>
    <property type="molecule type" value="mRNA"/>
</dbReference>
<dbReference type="EMBL" id="AC092620">
    <property type="status" value="NOT_ANNOTATED_CDS"/>
    <property type="molecule type" value="Genomic_DNA"/>
</dbReference>
<dbReference type="EMBL" id="AC092837">
    <property type="status" value="NOT_ANNOTATED_CDS"/>
    <property type="molecule type" value="Genomic_DNA"/>
</dbReference>
<dbReference type="EMBL" id="AC110421">
    <property type="status" value="NOT_ANNOTATED_CDS"/>
    <property type="molecule type" value="Genomic_DNA"/>
</dbReference>
<dbReference type="EMBL" id="BC101462">
    <property type="protein sequence ID" value="AAI01463.1"/>
    <property type="molecule type" value="mRNA"/>
</dbReference>
<dbReference type="EMBL" id="BC101463">
    <property type="protein sequence ID" value="AAI01464.1"/>
    <property type="molecule type" value="mRNA"/>
</dbReference>
<dbReference type="EMBL" id="BC104741">
    <property type="protein sequence ID" value="AAI04742.1"/>
    <property type="molecule type" value="mRNA"/>
</dbReference>
<dbReference type="EMBL" id="AF043467">
    <property type="protein sequence ID" value="AAD02280.1"/>
    <property type="molecule type" value="mRNA"/>
</dbReference>
<dbReference type="CCDS" id="CCDS46421.1"/>
<dbReference type="RefSeq" id="NP_009157.1">
    <property type="nucleotide sequence ID" value="NM_007226.3"/>
</dbReference>
<dbReference type="SMR" id="O95156"/>
<dbReference type="BioGRID" id="116410">
    <property type="interactions" value="34"/>
</dbReference>
<dbReference type="FunCoup" id="O95156">
    <property type="interactions" value="33"/>
</dbReference>
<dbReference type="IntAct" id="O95156">
    <property type="interactions" value="28"/>
</dbReference>
<dbReference type="STRING" id="9606.ENSP00000272641"/>
<dbReference type="GlyCosmos" id="O95156">
    <property type="glycosylation" value="4 sites, No reported glycans"/>
</dbReference>
<dbReference type="GlyGen" id="O95156">
    <property type="glycosylation" value="4 sites"/>
</dbReference>
<dbReference type="iPTMnet" id="O95156"/>
<dbReference type="PhosphoSitePlus" id="O95156"/>
<dbReference type="BioMuta" id="NXPH2"/>
<dbReference type="MassIVE" id="O95156"/>
<dbReference type="PaxDb" id="9606-ENSP00000272641"/>
<dbReference type="PeptideAtlas" id="O95156"/>
<dbReference type="ProteomicsDB" id="50673"/>
<dbReference type="Antibodypedia" id="51377">
    <property type="antibodies" value="99 antibodies from 23 providers"/>
</dbReference>
<dbReference type="DNASU" id="11249"/>
<dbReference type="Ensembl" id="ENST00000272641.4">
    <property type="protein sequence ID" value="ENSP00000272641.3"/>
    <property type="gene ID" value="ENSG00000144227.5"/>
</dbReference>
<dbReference type="GeneID" id="11249"/>
<dbReference type="KEGG" id="hsa:11249"/>
<dbReference type="MANE-Select" id="ENST00000272641.4">
    <property type="protein sequence ID" value="ENSP00000272641.3"/>
    <property type="RefSeq nucleotide sequence ID" value="NM_007226.3"/>
    <property type="RefSeq protein sequence ID" value="NP_009157.1"/>
</dbReference>
<dbReference type="UCSC" id="uc002tvi.4">
    <property type="organism name" value="human"/>
</dbReference>
<dbReference type="AGR" id="HGNC:8076"/>
<dbReference type="CTD" id="11249"/>
<dbReference type="DisGeNET" id="11249"/>
<dbReference type="GeneCards" id="NXPH2"/>
<dbReference type="HGNC" id="HGNC:8076">
    <property type="gene designation" value="NXPH2"/>
</dbReference>
<dbReference type="HPA" id="ENSG00000144227">
    <property type="expression patterns" value="Group enriched (brain, kidney, ovary, retina)"/>
</dbReference>
<dbReference type="MIM" id="604635">
    <property type="type" value="gene"/>
</dbReference>
<dbReference type="neXtProt" id="NX_O95156"/>
<dbReference type="OpenTargets" id="ENSG00000144227"/>
<dbReference type="PharmGKB" id="PA31864"/>
<dbReference type="VEuPathDB" id="HostDB:ENSG00000144227"/>
<dbReference type="eggNOG" id="ENOG502QUPW">
    <property type="taxonomic scope" value="Eukaryota"/>
</dbReference>
<dbReference type="GeneTree" id="ENSGT00950000182883"/>
<dbReference type="HOGENOM" id="CLU_067114_2_1_1"/>
<dbReference type="InParanoid" id="O95156"/>
<dbReference type="OMA" id="IFCDAKQ"/>
<dbReference type="OrthoDB" id="9863867at2759"/>
<dbReference type="PAN-GO" id="O95156">
    <property type="GO annotations" value="1 GO annotation based on evolutionary models"/>
</dbReference>
<dbReference type="PhylomeDB" id="O95156"/>
<dbReference type="TreeFam" id="TF333047"/>
<dbReference type="PathwayCommons" id="O95156"/>
<dbReference type="SignaLink" id="O95156"/>
<dbReference type="BioGRID-ORCS" id="11249">
    <property type="hits" value="8 hits in 1144 CRISPR screens"/>
</dbReference>
<dbReference type="GenomeRNAi" id="11249"/>
<dbReference type="Pharos" id="O95156">
    <property type="development level" value="Tdark"/>
</dbReference>
<dbReference type="PRO" id="PR:O95156"/>
<dbReference type="Proteomes" id="UP000005640">
    <property type="component" value="Chromosome 2"/>
</dbReference>
<dbReference type="RNAct" id="O95156">
    <property type="molecule type" value="protein"/>
</dbReference>
<dbReference type="Bgee" id="ENSG00000144227">
    <property type="expression patterns" value="Expressed in pons and 74 other cell types or tissues"/>
</dbReference>
<dbReference type="GO" id="GO:0005576">
    <property type="term" value="C:extracellular region"/>
    <property type="evidence" value="ECO:0007669"/>
    <property type="project" value="UniProtKB-SubCell"/>
</dbReference>
<dbReference type="GO" id="GO:0005102">
    <property type="term" value="F:signaling receptor binding"/>
    <property type="evidence" value="ECO:0000318"/>
    <property type="project" value="GO_Central"/>
</dbReference>
<dbReference type="GO" id="GO:0007218">
    <property type="term" value="P:neuropeptide signaling pathway"/>
    <property type="evidence" value="ECO:0000303"/>
    <property type="project" value="UniProtKB"/>
</dbReference>
<dbReference type="InterPro" id="IPR010450">
    <property type="entry name" value="Nxph"/>
</dbReference>
<dbReference type="InterPro" id="IPR026845">
    <property type="entry name" value="NXPH/NXPE"/>
</dbReference>
<dbReference type="PANTHER" id="PTHR17103">
    <property type="entry name" value="NEUREXOPHILIN"/>
    <property type="match status" value="1"/>
</dbReference>
<dbReference type="PANTHER" id="PTHR17103:SF11">
    <property type="entry name" value="NEUREXOPHILIN-2"/>
    <property type="match status" value="1"/>
</dbReference>
<dbReference type="Pfam" id="PF06312">
    <property type="entry name" value="Neurexophilin"/>
    <property type="match status" value="1"/>
</dbReference>
<dbReference type="PIRSF" id="PIRSF038019">
    <property type="entry name" value="Neurexophilin"/>
    <property type="match status" value="1"/>
</dbReference>
<comment type="function">
    <text evidence="3">May be signaling molecules that resemble neuropeptides and that act by binding to alpha-neurexins and possibly other receptors.</text>
</comment>
<comment type="subcellular location">
    <subcellularLocation>
        <location evidence="3">Secreted</location>
    </subcellularLocation>
</comment>
<comment type="tissue specificity">
    <text>Expressed in brain and kidney.</text>
</comment>
<comment type="PTM">
    <text evidence="1">May be proteolytically processed at the boundary between the N-terminal non-conserved and the central conserved domain in neuron-like cells.</text>
</comment>
<comment type="similarity">
    <text evidence="3">Belongs to the neurexophilin family.</text>
</comment>
<name>NXPH2_HUMAN</name>